<accession>B0TM22</accession>
<sequence>MAKLTKRARLIREKVEATKSYDINEAVALLKELATAKFLESVDVAVNLGVDPRKSDQNVRGATVLPHGTGRDVRVAVFTQGANAEAAKEAGAELVGMDELAAQIKAGEMNFDVVIASPDAMRVVGMLGQILGPRGLMPNPKTGTVTPNVAEAVKNAKAGQVRYRNDKNGIIHTTIGKVDFEPAQLKENLEALLGALKKAKPAAAKGVFIKKVSISTTMGAGVAVDQGTLEDAK</sequence>
<comment type="function">
    <text evidence="1">Binds directly to 23S rRNA. The L1 stalk is quite mobile in the ribosome, and is involved in E site tRNA release.</text>
</comment>
<comment type="function">
    <text evidence="1">Protein L1 is also a translational repressor protein, it controls the translation of the L11 operon by binding to its mRNA.</text>
</comment>
<comment type="subunit">
    <text evidence="1">Part of the 50S ribosomal subunit.</text>
</comment>
<comment type="similarity">
    <text evidence="1">Belongs to the universal ribosomal protein uL1 family.</text>
</comment>
<protein>
    <recommendedName>
        <fullName evidence="1">Large ribosomal subunit protein uL1</fullName>
    </recommendedName>
    <alternativeName>
        <fullName evidence="2">50S ribosomal protein L1</fullName>
    </alternativeName>
</protein>
<gene>
    <name evidence="1" type="primary">rplA</name>
    <name type="ordered locus">Shal_4144</name>
</gene>
<dbReference type="EMBL" id="CP000931">
    <property type="protein sequence ID" value="ABZ78684.1"/>
    <property type="molecule type" value="Genomic_DNA"/>
</dbReference>
<dbReference type="RefSeq" id="WP_012279189.1">
    <property type="nucleotide sequence ID" value="NC_010334.1"/>
</dbReference>
<dbReference type="SMR" id="B0TM22"/>
<dbReference type="STRING" id="458817.Shal_4144"/>
<dbReference type="KEGG" id="shl:Shal_4144"/>
<dbReference type="eggNOG" id="COG0081">
    <property type="taxonomic scope" value="Bacteria"/>
</dbReference>
<dbReference type="HOGENOM" id="CLU_062853_0_0_6"/>
<dbReference type="OrthoDB" id="9803740at2"/>
<dbReference type="Proteomes" id="UP000001317">
    <property type="component" value="Chromosome"/>
</dbReference>
<dbReference type="GO" id="GO:0022625">
    <property type="term" value="C:cytosolic large ribosomal subunit"/>
    <property type="evidence" value="ECO:0007669"/>
    <property type="project" value="TreeGrafter"/>
</dbReference>
<dbReference type="GO" id="GO:0019843">
    <property type="term" value="F:rRNA binding"/>
    <property type="evidence" value="ECO:0007669"/>
    <property type="project" value="UniProtKB-UniRule"/>
</dbReference>
<dbReference type="GO" id="GO:0003735">
    <property type="term" value="F:structural constituent of ribosome"/>
    <property type="evidence" value="ECO:0007669"/>
    <property type="project" value="InterPro"/>
</dbReference>
<dbReference type="GO" id="GO:0000049">
    <property type="term" value="F:tRNA binding"/>
    <property type="evidence" value="ECO:0007669"/>
    <property type="project" value="UniProtKB-KW"/>
</dbReference>
<dbReference type="GO" id="GO:0006417">
    <property type="term" value="P:regulation of translation"/>
    <property type="evidence" value="ECO:0007669"/>
    <property type="project" value="UniProtKB-KW"/>
</dbReference>
<dbReference type="GO" id="GO:0006412">
    <property type="term" value="P:translation"/>
    <property type="evidence" value="ECO:0007669"/>
    <property type="project" value="UniProtKB-UniRule"/>
</dbReference>
<dbReference type="CDD" id="cd00403">
    <property type="entry name" value="Ribosomal_L1"/>
    <property type="match status" value="1"/>
</dbReference>
<dbReference type="FunFam" id="3.40.50.790:FF:000001">
    <property type="entry name" value="50S ribosomal protein L1"/>
    <property type="match status" value="1"/>
</dbReference>
<dbReference type="Gene3D" id="3.30.190.20">
    <property type="match status" value="1"/>
</dbReference>
<dbReference type="Gene3D" id="3.40.50.790">
    <property type="match status" value="1"/>
</dbReference>
<dbReference type="HAMAP" id="MF_01318_B">
    <property type="entry name" value="Ribosomal_uL1_B"/>
    <property type="match status" value="1"/>
</dbReference>
<dbReference type="InterPro" id="IPR005878">
    <property type="entry name" value="Ribosom_uL1_bac-type"/>
</dbReference>
<dbReference type="InterPro" id="IPR002143">
    <property type="entry name" value="Ribosomal_uL1"/>
</dbReference>
<dbReference type="InterPro" id="IPR023674">
    <property type="entry name" value="Ribosomal_uL1-like"/>
</dbReference>
<dbReference type="InterPro" id="IPR028364">
    <property type="entry name" value="Ribosomal_uL1/biogenesis"/>
</dbReference>
<dbReference type="InterPro" id="IPR016095">
    <property type="entry name" value="Ribosomal_uL1_3-a/b-sand"/>
</dbReference>
<dbReference type="InterPro" id="IPR023673">
    <property type="entry name" value="Ribosomal_uL1_CS"/>
</dbReference>
<dbReference type="NCBIfam" id="TIGR01169">
    <property type="entry name" value="rplA_bact"/>
    <property type="match status" value="1"/>
</dbReference>
<dbReference type="PANTHER" id="PTHR36427">
    <property type="entry name" value="54S RIBOSOMAL PROTEIN L1, MITOCHONDRIAL"/>
    <property type="match status" value="1"/>
</dbReference>
<dbReference type="PANTHER" id="PTHR36427:SF3">
    <property type="entry name" value="LARGE RIBOSOMAL SUBUNIT PROTEIN UL1M"/>
    <property type="match status" value="1"/>
</dbReference>
<dbReference type="Pfam" id="PF00687">
    <property type="entry name" value="Ribosomal_L1"/>
    <property type="match status" value="1"/>
</dbReference>
<dbReference type="PIRSF" id="PIRSF002155">
    <property type="entry name" value="Ribosomal_L1"/>
    <property type="match status" value="1"/>
</dbReference>
<dbReference type="SUPFAM" id="SSF56808">
    <property type="entry name" value="Ribosomal protein L1"/>
    <property type="match status" value="1"/>
</dbReference>
<dbReference type="PROSITE" id="PS01199">
    <property type="entry name" value="RIBOSOMAL_L1"/>
    <property type="match status" value="1"/>
</dbReference>
<evidence type="ECO:0000255" key="1">
    <source>
        <dbReference type="HAMAP-Rule" id="MF_01318"/>
    </source>
</evidence>
<evidence type="ECO:0000305" key="2"/>
<reference key="1">
    <citation type="submission" date="2008-01" db="EMBL/GenBank/DDBJ databases">
        <title>Complete sequence of Shewanella halifaxensis HAW-EB4.</title>
        <authorList>
            <consortium name="US DOE Joint Genome Institute"/>
            <person name="Copeland A."/>
            <person name="Lucas S."/>
            <person name="Lapidus A."/>
            <person name="Glavina del Rio T."/>
            <person name="Dalin E."/>
            <person name="Tice H."/>
            <person name="Bruce D."/>
            <person name="Goodwin L."/>
            <person name="Pitluck S."/>
            <person name="Sims D."/>
            <person name="Brettin T."/>
            <person name="Detter J.C."/>
            <person name="Han C."/>
            <person name="Kuske C.R."/>
            <person name="Schmutz J."/>
            <person name="Larimer F."/>
            <person name="Land M."/>
            <person name="Hauser L."/>
            <person name="Kyrpides N."/>
            <person name="Kim E."/>
            <person name="Zhao J.-S."/>
            <person name="Richardson P."/>
        </authorList>
    </citation>
    <scope>NUCLEOTIDE SEQUENCE [LARGE SCALE GENOMIC DNA]</scope>
    <source>
        <strain>HAW-EB4</strain>
    </source>
</reference>
<proteinExistence type="inferred from homology"/>
<organism>
    <name type="scientific">Shewanella halifaxensis (strain HAW-EB4)</name>
    <dbReference type="NCBI Taxonomy" id="458817"/>
    <lineage>
        <taxon>Bacteria</taxon>
        <taxon>Pseudomonadati</taxon>
        <taxon>Pseudomonadota</taxon>
        <taxon>Gammaproteobacteria</taxon>
        <taxon>Alteromonadales</taxon>
        <taxon>Shewanellaceae</taxon>
        <taxon>Shewanella</taxon>
    </lineage>
</organism>
<keyword id="KW-0678">Repressor</keyword>
<keyword id="KW-0687">Ribonucleoprotein</keyword>
<keyword id="KW-0689">Ribosomal protein</keyword>
<keyword id="KW-0694">RNA-binding</keyword>
<keyword id="KW-0699">rRNA-binding</keyword>
<keyword id="KW-0810">Translation regulation</keyword>
<keyword id="KW-0820">tRNA-binding</keyword>
<name>RL1_SHEHH</name>
<feature type="chain" id="PRO_1000086306" description="Large ribosomal subunit protein uL1">
    <location>
        <begin position="1"/>
        <end position="233"/>
    </location>
</feature>